<evidence type="ECO:0000250" key="1">
    <source>
        <dbReference type="UniProtKB" id="Q32P41"/>
    </source>
</evidence>
<evidence type="ECO:0000255" key="2">
    <source>
        <dbReference type="HAMAP-Rule" id="MF_03152"/>
    </source>
</evidence>
<evidence type="ECO:0000256" key="3">
    <source>
        <dbReference type="SAM" id="MobiDB-lite"/>
    </source>
</evidence>
<evidence type="ECO:0000305" key="4"/>
<reference key="1">
    <citation type="journal article" date="2013" name="Nature">
        <title>The zebrafish reference genome sequence and its relationship to the human genome.</title>
        <authorList>
            <person name="Howe K."/>
            <person name="Clark M.D."/>
            <person name="Torroja C.F."/>
            <person name="Torrance J."/>
            <person name="Berthelot C."/>
            <person name="Muffato M."/>
            <person name="Collins J.E."/>
            <person name="Humphray S."/>
            <person name="McLaren K."/>
            <person name="Matthews L."/>
            <person name="McLaren S."/>
            <person name="Sealy I."/>
            <person name="Caccamo M."/>
            <person name="Churcher C."/>
            <person name="Scott C."/>
            <person name="Barrett J.C."/>
            <person name="Koch R."/>
            <person name="Rauch G.J."/>
            <person name="White S."/>
            <person name="Chow W."/>
            <person name="Kilian B."/>
            <person name="Quintais L.T."/>
            <person name="Guerra-Assuncao J.A."/>
            <person name="Zhou Y."/>
            <person name="Gu Y."/>
            <person name="Yen J."/>
            <person name="Vogel J.H."/>
            <person name="Eyre T."/>
            <person name="Redmond S."/>
            <person name="Banerjee R."/>
            <person name="Chi J."/>
            <person name="Fu B."/>
            <person name="Langley E."/>
            <person name="Maguire S.F."/>
            <person name="Laird G.K."/>
            <person name="Lloyd D."/>
            <person name="Kenyon E."/>
            <person name="Donaldson S."/>
            <person name="Sehra H."/>
            <person name="Almeida-King J."/>
            <person name="Loveland J."/>
            <person name="Trevanion S."/>
            <person name="Jones M."/>
            <person name="Quail M."/>
            <person name="Willey D."/>
            <person name="Hunt A."/>
            <person name="Burton J."/>
            <person name="Sims S."/>
            <person name="McLay K."/>
            <person name="Plumb B."/>
            <person name="Davis J."/>
            <person name="Clee C."/>
            <person name="Oliver K."/>
            <person name="Clark R."/>
            <person name="Riddle C."/>
            <person name="Elliot D."/>
            <person name="Threadgold G."/>
            <person name="Harden G."/>
            <person name="Ware D."/>
            <person name="Begum S."/>
            <person name="Mortimore B."/>
            <person name="Kerry G."/>
            <person name="Heath P."/>
            <person name="Phillimore B."/>
            <person name="Tracey A."/>
            <person name="Corby N."/>
            <person name="Dunn M."/>
            <person name="Johnson C."/>
            <person name="Wood J."/>
            <person name="Clark S."/>
            <person name="Pelan S."/>
            <person name="Griffiths G."/>
            <person name="Smith M."/>
            <person name="Glithero R."/>
            <person name="Howden P."/>
            <person name="Barker N."/>
            <person name="Lloyd C."/>
            <person name="Stevens C."/>
            <person name="Harley J."/>
            <person name="Holt K."/>
            <person name="Panagiotidis G."/>
            <person name="Lovell J."/>
            <person name="Beasley H."/>
            <person name="Henderson C."/>
            <person name="Gordon D."/>
            <person name="Auger K."/>
            <person name="Wright D."/>
            <person name="Collins J."/>
            <person name="Raisen C."/>
            <person name="Dyer L."/>
            <person name="Leung K."/>
            <person name="Robertson L."/>
            <person name="Ambridge K."/>
            <person name="Leongamornlert D."/>
            <person name="McGuire S."/>
            <person name="Gilderthorp R."/>
            <person name="Griffiths C."/>
            <person name="Manthravadi D."/>
            <person name="Nichol S."/>
            <person name="Barker G."/>
            <person name="Whitehead S."/>
            <person name="Kay M."/>
            <person name="Brown J."/>
            <person name="Murnane C."/>
            <person name="Gray E."/>
            <person name="Humphries M."/>
            <person name="Sycamore N."/>
            <person name="Barker D."/>
            <person name="Saunders D."/>
            <person name="Wallis J."/>
            <person name="Babbage A."/>
            <person name="Hammond S."/>
            <person name="Mashreghi-Mohammadi M."/>
            <person name="Barr L."/>
            <person name="Martin S."/>
            <person name="Wray P."/>
            <person name="Ellington A."/>
            <person name="Matthews N."/>
            <person name="Ellwood M."/>
            <person name="Woodmansey R."/>
            <person name="Clark G."/>
            <person name="Cooper J."/>
            <person name="Tromans A."/>
            <person name="Grafham D."/>
            <person name="Skuce C."/>
            <person name="Pandian R."/>
            <person name="Andrews R."/>
            <person name="Harrison E."/>
            <person name="Kimberley A."/>
            <person name="Garnett J."/>
            <person name="Fosker N."/>
            <person name="Hall R."/>
            <person name="Garner P."/>
            <person name="Kelly D."/>
            <person name="Bird C."/>
            <person name="Palmer S."/>
            <person name="Gehring I."/>
            <person name="Berger A."/>
            <person name="Dooley C.M."/>
            <person name="Ersan-Urun Z."/>
            <person name="Eser C."/>
            <person name="Geiger H."/>
            <person name="Geisler M."/>
            <person name="Karotki L."/>
            <person name="Kirn A."/>
            <person name="Konantz J."/>
            <person name="Konantz M."/>
            <person name="Oberlander M."/>
            <person name="Rudolph-Geiger S."/>
            <person name="Teucke M."/>
            <person name="Lanz C."/>
            <person name="Raddatz G."/>
            <person name="Osoegawa K."/>
            <person name="Zhu B."/>
            <person name="Rapp A."/>
            <person name="Widaa S."/>
            <person name="Langford C."/>
            <person name="Yang F."/>
            <person name="Schuster S.C."/>
            <person name="Carter N.P."/>
            <person name="Harrow J."/>
            <person name="Ning Z."/>
            <person name="Herrero J."/>
            <person name="Searle S.M."/>
            <person name="Enright A."/>
            <person name="Geisler R."/>
            <person name="Plasterk R.H."/>
            <person name="Lee C."/>
            <person name="Westerfield M."/>
            <person name="de Jong P.J."/>
            <person name="Zon L.I."/>
            <person name="Postlethwait J.H."/>
            <person name="Nusslein-Volhard C."/>
            <person name="Hubbard T.J."/>
            <person name="Roest Crollius H."/>
            <person name="Rogers J."/>
            <person name="Stemple D.L."/>
        </authorList>
    </citation>
    <scope>NUCLEOTIDE SEQUENCE [LARGE SCALE GENOMIC DNA]</scope>
    <source>
        <strain>Tuebingen</strain>
    </source>
</reference>
<organism>
    <name type="scientific">Danio rerio</name>
    <name type="common">Zebrafish</name>
    <name type="synonym">Brachydanio rerio</name>
    <dbReference type="NCBI Taxonomy" id="7955"/>
    <lineage>
        <taxon>Eukaryota</taxon>
        <taxon>Metazoa</taxon>
        <taxon>Chordata</taxon>
        <taxon>Craniata</taxon>
        <taxon>Vertebrata</taxon>
        <taxon>Euteleostomi</taxon>
        <taxon>Actinopterygii</taxon>
        <taxon>Neopterygii</taxon>
        <taxon>Teleostei</taxon>
        <taxon>Ostariophysi</taxon>
        <taxon>Cypriniformes</taxon>
        <taxon>Danionidae</taxon>
        <taxon>Danioninae</taxon>
        <taxon>Danio</taxon>
    </lineage>
</organism>
<name>TRM5_DANRE</name>
<keyword id="KW-0963">Cytoplasm</keyword>
<keyword id="KW-0489">Methyltransferase</keyword>
<keyword id="KW-0496">Mitochondrion</keyword>
<keyword id="KW-0539">Nucleus</keyword>
<keyword id="KW-1185">Reference proteome</keyword>
<keyword id="KW-0949">S-adenosyl-L-methionine</keyword>
<keyword id="KW-0808">Transferase</keyword>
<keyword id="KW-0809">Transit peptide</keyword>
<keyword id="KW-0819">tRNA processing</keyword>
<protein>
    <recommendedName>
        <fullName evidence="2">tRNA (guanine(37)-N(1))-methyltransferase</fullName>
        <ecNumber evidence="2">2.1.1.228</ecNumber>
    </recommendedName>
    <alternativeName>
        <fullName evidence="2">M1G-methyltransferase</fullName>
    </alternativeName>
    <alternativeName>
        <fullName evidence="2">tRNA [GM37] methyltransferase</fullName>
    </alternativeName>
    <alternativeName>
        <fullName evidence="2">tRNA methyltransferase 5 homolog</fullName>
    </alternativeName>
</protein>
<comment type="function">
    <text evidence="1 2">Involved in mitochondrial tRNA methylation (By similarity). Specifically methylates the N1 position of guanosine-37 in various tRNAs. Methylation is not dependent on the nature of the nucleoside 5' of the target nucleoside. This is the first step in the biosynthesis of wybutosine (yW), a modified base adjacent to the anticodon of tRNAs and required for accurate decoding.</text>
</comment>
<comment type="catalytic activity">
    <reaction evidence="2">
        <text>guanosine(37) in tRNA + S-adenosyl-L-methionine = N(1)-methylguanosine(37) in tRNA + S-adenosyl-L-homocysteine + H(+)</text>
        <dbReference type="Rhea" id="RHEA:36899"/>
        <dbReference type="Rhea" id="RHEA-COMP:10145"/>
        <dbReference type="Rhea" id="RHEA-COMP:10147"/>
        <dbReference type="ChEBI" id="CHEBI:15378"/>
        <dbReference type="ChEBI" id="CHEBI:57856"/>
        <dbReference type="ChEBI" id="CHEBI:59789"/>
        <dbReference type="ChEBI" id="CHEBI:73542"/>
        <dbReference type="ChEBI" id="CHEBI:74269"/>
        <dbReference type="EC" id="2.1.1.228"/>
    </reaction>
</comment>
<comment type="subunit">
    <text evidence="2">Monomer.</text>
</comment>
<comment type="subcellular location">
    <subcellularLocation>
        <location evidence="2">Mitochondrion matrix</location>
    </subcellularLocation>
    <subcellularLocation>
        <location evidence="2">Nucleus</location>
    </subcellularLocation>
    <subcellularLocation>
        <location evidence="2">Cytoplasm</location>
    </subcellularLocation>
    <text evidence="2">Predominantly in the mitochondria and in the nucleus.</text>
</comment>
<comment type="similarity">
    <text evidence="4">Belongs to the class I-like SAM-binding methyltransferase superfamily. TRM5/TYW2 family.</text>
</comment>
<dbReference type="EC" id="2.1.1.228" evidence="2"/>
<dbReference type="EMBL" id="BX537123">
    <property type="protein sequence ID" value="CAX14731.1"/>
    <property type="molecule type" value="Genomic_DNA"/>
</dbReference>
<dbReference type="RefSeq" id="NP_001139055.1">
    <property type="nucleotide sequence ID" value="NM_001145583.1"/>
</dbReference>
<dbReference type="SMR" id="B8A5G9"/>
<dbReference type="FunCoup" id="B8A5G9">
    <property type="interactions" value="1994"/>
</dbReference>
<dbReference type="STRING" id="7955.ENSDARP00000080424"/>
<dbReference type="PaxDb" id="7955-ENSDARP00000080424"/>
<dbReference type="PeptideAtlas" id="B8A5G9"/>
<dbReference type="Ensembl" id="ENSDART00000085989">
    <property type="protein sequence ID" value="ENSDARP00000080424"/>
    <property type="gene ID" value="ENSDARG00000069278"/>
</dbReference>
<dbReference type="GeneID" id="564078"/>
<dbReference type="KEGG" id="dre:564078"/>
<dbReference type="AGR" id="ZFIN:ZDB-GENE-030131-5978"/>
<dbReference type="CTD" id="57570"/>
<dbReference type="ZFIN" id="ZDB-GENE-030131-5978">
    <property type="gene designation" value="trmt5"/>
</dbReference>
<dbReference type="eggNOG" id="KOG2078">
    <property type="taxonomic scope" value="Eukaryota"/>
</dbReference>
<dbReference type="HOGENOM" id="CLU_022610_2_3_1"/>
<dbReference type="InParanoid" id="B8A5G9"/>
<dbReference type="OMA" id="VGSHSQF"/>
<dbReference type="OrthoDB" id="408788at2759"/>
<dbReference type="PhylomeDB" id="B8A5G9"/>
<dbReference type="TreeFam" id="TF315073"/>
<dbReference type="PRO" id="PR:B8A5G9"/>
<dbReference type="Proteomes" id="UP000000437">
    <property type="component" value="Chromosome 13"/>
</dbReference>
<dbReference type="Bgee" id="ENSDARG00000069278">
    <property type="expression patterns" value="Expressed in ovary and 28 other cell types or tissues"/>
</dbReference>
<dbReference type="GO" id="GO:0005737">
    <property type="term" value="C:cytoplasm"/>
    <property type="evidence" value="ECO:0000318"/>
    <property type="project" value="GO_Central"/>
</dbReference>
<dbReference type="GO" id="GO:0005759">
    <property type="term" value="C:mitochondrial matrix"/>
    <property type="evidence" value="ECO:0000250"/>
    <property type="project" value="UniProtKB"/>
</dbReference>
<dbReference type="GO" id="GO:0005634">
    <property type="term" value="C:nucleus"/>
    <property type="evidence" value="ECO:0007669"/>
    <property type="project" value="UniProtKB-SubCell"/>
</dbReference>
<dbReference type="GO" id="GO:0052906">
    <property type="term" value="F:tRNA (guanine(37)-N1)-methyltransferase activity"/>
    <property type="evidence" value="ECO:0007669"/>
    <property type="project" value="UniProtKB-UniRule"/>
</dbReference>
<dbReference type="GO" id="GO:0008175">
    <property type="term" value="F:tRNA methyltransferase activity"/>
    <property type="evidence" value="ECO:0000318"/>
    <property type="project" value="GO_Central"/>
</dbReference>
<dbReference type="GO" id="GO:0070901">
    <property type="term" value="P:mitochondrial tRNA methylation"/>
    <property type="evidence" value="ECO:0000318"/>
    <property type="project" value="GO_Central"/>
</dbReference>
<dbReference type="GO" id="GO:0002939">
    <property type="term" value="P:tRNA N1-guanine methylation"/>
    <property type="evidence" value="ECO:0000318"/>
    <property type="project" value="GO_Central"/>
</dbReference>
<dbReference type="CDD" id="cd02440">
    <property type="entry name" value="AdoMet_MTases"/>
    <property type="match status" value="1"/>
</dbReference>
<dbReference type="FunFam" id="3.30.300.110:FF:000001">
    <property type="entry name" value="tRNA (guanine(37)-N1)-methyltransferase"/>
    <property type="match status" value="1"/>
</dbReference>
<dbReference type="FunFam" id="3.40.50.150:FF:000102">
    <property type="entry name" value="tRNA (guanine(37)-N1)-methyltransferase"/>
    <property type="match status" value="1"/>
</dbReference>
<dbReference type="Gene3D" id="3.30.300.110">
    <property type="entry name" value="Met-10+ protein-like domains"/>
    <property type="match status" value="1"/>
</dbReference>
<dbReference type="Gene3D" id="3.40.50.150">
    <property type="entry name" value="Vaccinia Virus protein VP39"/>
    <property type="match status" value="1"/>
</dbReference>
<dbReference type="HAMAP" id="MF_03152">
    <property type="entry name" value="TRM5"/>
    <property type="match status" value="1"/>
</dbReference>
<dbReference type="InterPro" id="IPR030382">
    <property type="entry name" value="MeTrfase_TRM5/TYW2"/>
</dbReference>
<dbReference type="InterPro" id="IPR029063">
    <property type="entry name" value="SAM-dependent_MTases_sf"/>
</dbReference>
<dbReference type="InterPro" id="IPR056743">
    <property type="entry name" value="TRM5-TYW2-like_MTfase"/>
</dbReference>
<dbReference type="InterPro" id="IPR056744">
    <property type="entry name" value="TRM5/TYW2-like_N"/>
</dbReference>
<dbReference type="InterPro" id="IPR025792">
    <property type="entry name" value="tRNA_Gua_MeTrfase_euk"/>
</dbReference>
<dbReference type="PANTHER" id="PTHR23245:SF36">
    <property type="entry name" value="TRNA (GUANINE(37)-N1)-METHYLTRANSFERASE"/>
    <property type="match status" value="1"/>
</dbReference>
<dbReference type="PANTHER" id="PTHR23245">
    <property type="entry name" value="TRNA METHYLTRANSFERASE"/>
    <property type="match status" value="1"/>
</dbReference>
<dbReference type="Pfam" id="PF02475">
    <property type="entry name" value="TRM5-TYW2_MTfase"/>
    <property type="match status" value="1"/>
</dbReference>
<dbReference type="Pfam" id="PF25133">
    <property type="entry name" value="TYW2_N_2"/>
    <property type="match status" value="1"/>
</dbReference>
<dbReference type="SUPFAM" id="SSF53335">
    <property type="entry name" value="S-adenosyl-L-methionine-dependent methyltransferases"/>
    <property type="match status" value="1"/>
</dbReference>
<dbReference type="PROSITE" id="PS51684">
    <property type="entry name" value="SAM_MT_TRM5_TYW2"/>
    <property type="match status" value="1"/>
</dbReference>
<sequence length="480" mass="54047">MAAVWRRSARLFILLQRHHSCTFTSQNLNHFMRSQKVMTDQSQTDLGLFKPPSTVRGMTELDRSAFNQTVSVPAIRLPTNILNKAVKSLKKVALQRPGLKRVVEEHSEDGNADCGNIEHRLLLLDPNSITSSDSFGSDEAEALKAYSVPQEIQSYELKLTYENFKSEEILRAVLPEGQGVTSGFSRVGHIAHMNLREHQLPYRKLIGQVIIDKNPGITCVVNKTNTIDSTYRNFQMEVLAGESNMVAKVRENGVLYEFDFSRVYWNPRLSTEHERIVSLLHRGDTVVDVFAGVGPFAIPAARRGCAVLANDLNPESFRWLQHNAKLNKVDQKITTSNLDGRDFIRGPVRERLPALMKGSQKIHVVMNLPALALEFLDAFKGLLDPEPDQSLSNLPQVHCYGFSKENDPQRDVVERAEASLKTNLQGQCSVHLVRNVAPNKEMMCVSFTLPRGVLYKTHTQDRDTSEEPCPKKQKCEDSTN</sequence>
<accession>B8A5G9</accession>
<feature type="transit peptide" description="Mitochondrion" evidence="2">
    <location>
        <begin position="1"/>
        <end position="18"/>
    </location>
</feature>
<feature type="chain" id="PRO_0000414123" description="tRNA (guanine(37)-N(1))-methyltransferase">
    <location>
        <begin position="19"/>
        <end position="480"/>
    </location>
</feature>
<feature type="region of interest" description="Disordered" evidence="3">
    <location>
        <begin position="458"/>
        <end position="480"/>
    </location>
</feature>
<feature type="binding site" evidence="2">
    <location>
        <position position="273"/>
    </location>
    <ligand>
        <name>S-adenosyl-L-methionine</name>
        <dbReference type="ChEBI" id="CHEBI:59789"/>
    </ligand>
</feature>
<feature type="binding site" evidence="2">
    <location>
        <begin position="311"/>
        <end position="312"/>
    </location>
    <ligand>
        <name>S-adenosyl-L-methionine</name>
        <dbReference type="ChEBI" id="CHEBI:59789"/>
    </ligand>
</feature>
<feature type="binding site" evidence="2">
    <location>
        <begin position="339"/>
        <end position="340"/>
    </location>
    <ligand>
        <name>S-adenosyl-L-methionine</name>
        <dbReference type="ChEBI" id="CHEBI:59789"/>
    </ligand>
</feature>
<feature type="binding site" evidence="2">
    <location>
        <position position="367"/>
    </location>
    <ligand>
        <name>S-adenosyl-L-methionine</name>
        <dbReference type="ChEBI" id="CHEBI:59789"/>
    </ligand>
</feature>
<proteinExistence type="inferred from homology"/>
<gene>
    <name type="primary">trmt5</name>
    <name type="synonym">trm5</name>
    <name type="ORF">si:ch211-202m24.6</name>
</gene>